<name>NED82_DICDI</name>
<keyword id="KW-1185">Reference proteome</keyword>
<reference key="1">
    <citation type="journal article" date="2005" name="Nature">
        <title>The genome of the social amoeba Dictyostelium discoideum.</title>
        <authorList>
            <person name="Eichinger L."/>
            <person name="Pachebat J.A."/>
            <person name="Gloeckner G."/>
            <person name="Rajandream M.A."/>
            <person name="Sucgang R."/>
            <person name="Berriman M."/>
            <person name="Song J."/>
            <person name="Olsen R."/>
            <person name="Szafranski K."/>
            <person name="Xu Q."/>
            <person name="Tunggal B."/>
            <person name="Kummerfeld S."/>
            <person name="Madera M."/>
            <person name="Konfortov B.A."/>
            <person name="Rivero F."/>
            <person name="Bankier A.T."/>
            <person name="Lehmann R."/>
            <person name="Hamlin N."/>
            <person name="Davies R."/>
            <person name="Gaudet P."/>
            <person name="Fey P."/>
            <person name="Pilcher K."/>
            <person name="Chen G."/>
            <person name="Saunders D."/>
            <person name="Sodergren E.J."/>
            <person name="Davis P."/>
            <person name="Kerhornou A."/>
            <person name="Nie X."/>
            <person name="Hall N."/>
            <person name="Anjard C."/>
            <person name="Hemphill L."/>
            <person name="Bason N."/>
            <person name="Farbrother P."/>
            <person name="Desany B."/>
            <person name="Just E."/>
            <person name="Morio T."/>
            <person name="Rost R."/>
            <person name="Churcher C.M."/>
            <person name="Cooper J."/>
            <person name="Haydock S."/>
            <person name="van Driessche N."/>
            <person name="Cronin A."/>
            <person name="Goodhead I."/>
            <person name="Muzny D.M."/>
            <person name="Mourier T."/>
            <person name="Pain A."/>
            <person name="Lu M."/>
            <person name="Harper D."/>
            <person name="Lindsay R."/>
            <person name="Hauser H."/>
            <person name="James K.D."/>
            <person name="Quiles M."/>
            <person name="Madan Babu M."/>
            <person name="Saito T."/>
            <person name="Buchrieser C."/>
            <person name="Wardroper A."/>
            <person name="Felder M."/>
            <person name="Thangavelu M."/>
            <person name="Johnson D."/>
            <person name="Knights A."/>
            <person name="Loulseged H."/>
            <person name="Mungall K.L."/>
            <person name="Oliver K."/>
            <person name="Price C."/>
            <person name="Quail M.A."/>
            <person name="Urushihara H."/>
            <person name="Hernandez J."/>
            <person name="Rabbinowitsch E."/>
            <person name="Steffen D."/>
            <person name="Sanders M."/>
            <person name="Ma J."/>
            <person name="Kohara Y."/>
            <person name="Sharp S."/>
            <person name="Simmonds M.N."/>
            <person name="Spiegler S."/>
            <person name="Tivey A."/>
            <person name="Sugano S."/>
            <person name="White B."/>
            <person name="Walker D."/>
            <person name="Woodward J.R."/>
            <person name="Winckler T."/>
            <person name="Tanaka Y."/>
            <person name="Shaulsky G."/>
            <person name="Schleicher M."/>
            <person name="Weinstock G.M."/>
            <person name="Rosenthal A."/>
            <person name="Cox E.C."/>
            <person name="Chisholm R.L."/>
            <person name="Gibbs R.A."/>
            <person name="Loomis W.F."/>
            <person name="Platzer M."/>
            <person name="Kay R.R."/>
            <person name="Williams J.G."/>
            <person name="Dear P.H."/>
            <person name="Noegel A.A."/>
            <person name="Barrell B.G."/>
            <person name="Kuspa A."/>
        </authorList>
    </citation>
    <scope>NUCLEOTIDE SEQUENCE [LARGE SCALE GENOMIC DNA]</scope>
    <source>
        <strain>AX4</strain>
    </source>
</reference>
<dbReference type="EMBL" id="AAFI02000092">
    <property type="protein sequence ID" value="EAL63961.1"/>
    <property type="molecule type" value="Genomic_DNA"/>
</dbReference>
<dbReference type="RefSeq" id="XP_637468.1">
    <property type="nucleotide sequence ID" value="XM_632376.1"/>
</dbReference>
<dbReference type="SMR" id="Q54L35"/>
<dbReference type="STRING" id="44689.Q54L35"/>
<dbReference type="PaxDb" id="44689-DDB0266622"/>
<dbReference type="EnsemblProtists" id="EAL63961">
    <property type="protein sequence ID" value="EAL63961"/>
    <property type="gene ID" value="DDB_G0286927"/>
</dbReference>
<dbReference type="GeneID" id="8625867"/>
<dbReference type="KEGG" id="ddi:DDB_G0286927"/>
<dbReference type="dictyBase" id="DDB_G0286927">
    <property type="gene designation" value="nedd8l2"/>
</dbReference>
<dbReference type="VEuPathDB" id="AmoebaDB:DDB_G0286927"/>
<dbReference type="HOGENOM" id="CLU_010412_6_3_1"/>
<dbReference type="InParanoid" id="Q54L35"/>
<dbReference type="OMA" id="SRYIKVE"/>
<dbReference type="PhylomeDB" id="Q54L35"/>
<dbReference type="PRO" id="PR:Q54L35"/>
<dbReference type="Proteomes" id="UP000002195">
    <property type="component" value="Chromosome 4"/>
</dbReference>
<dbReference type="GO" id="GO:0005737">
    <property type="term" value="C:cytoplasm"/>
    <property type="evidence" value="ECO:0000318"/>
    <property type="project" value="GO_Central"/>
</dbReference>
<dbReference type="GO" id="GO:0005634">
    <property type="term" value="C:nucleus"/>
    <property type="evidence" value="ECO:0000318"/>
    <property type="project" value="GO_Central"/>
</dbReference>
<dbReference type="GO" id="GO:0031386">
    <property type="term" value="F:protein tag activity"/>
    <property type="evidence" value="ECO:0000318"/>
    <property type="project" value="GO_Central"/>
</dbReference>
<dbReference type="GO" id="GO:0031625">
    <property type="term" value="F:ubiquitin protein ligase binding"/>
    <property type="evidence" value="ECO:0000318"/>
    <property type="project" value="GO_Central"/>
</dbReference>
<dbReference type="GO" id="GO:0019941">
    <property type="term" value="P:modification-dependent protein catabolic process"/>
    <property type="evidence" value="ECO:0000318"/>
    <property type="project" value="GO_Central"/>
</dbReference>
<dbReference type="GO" id="GO:0016567">
    <property type="term" value="P:protein ubiquitination"/>
    <property type="evidence" value="ECO:0000318"/>
    <property type="project" value="GO_Central"/>
</dbReference>
<dbReference type="CDD" id="cd17039">
    <property type="entry name" value="Ubl_ubiquitin_like"/>
    <property type="match status" value="1"/>
</dbReference>
<dbReference type="Gene3D" id="3.10.20.90">
    <property type="entry name" value="Phosphatidylinositol 3-kinase Catalytic Subunit, Chain A, domain 1"/>
    <property type="match status" value="1"/>
</dbReference>
<dbReference type="InterPro" id="IPR000626">
    <property type="entry name" value="Ubiquitin-like_dom"/>
</dbReference>
<dbReference type="InterPro" id="IPR029071">
    <property type="entry name" value="Ubiquitin-like_domsf"/>
</dbReference>
<dbReference type="InterPro" id="IPR019956">
    <property type="entry name" value="Ubiquitin_dom"/>
</dbReference>
<dbReference type="InterPro" id="IPR050158">
    <property type="entry name" value="Ubiquitin_ubiquitin-like"/>
</dbReference>
<dbReference type="PANTHER" id="PTHR10666">
    <property type="entry name" value="UBIQUITIN"/>
    <property type="match status" value="1"/>
</dbReference>
<dbReference type="Pfam" id="PF00240">
    <property type="entry name" value="ubiquitin"/>
    <property type="match status" value="1"/>
</dbReference>
<dbReference type="PRINTS" id="PR00348">
    <property type="entry name" value="UBIQUITIN"/>
</dbReference>
<dbReference type="SMART" id="SM00213">
    <property type="entry name" value="UBQ"/>
    <property type="match status" value="1"/>
</dbReference>
<dbReference type="SUPFAM" id="SSF54236">
    <property type="entry name" value="Ubiquitin-like"/>
    <property type="match status" value="1"/>
</dbReference>
<dbReference type="PROSITE" id="PS50053">
    <property type="entry name" value="UBIQUITIN_2"/>
    <property type="match status" value="1"/>
</dbReference>
<organism>
    <name type="scientific">Dictyostelium discoideum</name>
    <name type="common">Social amoeba</name>
    <dbReference type="NCBI Taxonomy" id="44689"/>
    <lineage>
        <taxon>Eukaryota</taxon>
        <taxon>Amoebozoa</taxon>
        <taxon>Evosea</taxon>
        <taxon>Eumycetozoa</taxon>
        <taxon>Dictyostelia</taxon>
        <taxon>Dictyosteliales</taxon>
        <taxon>Dictyosteliaceae</taxon>
        <taxon>Dictyostelium</taxon>
    </lineage>
</organism>
<accession>Q54L35</accession>
<sequence>MNINLQFHSTGKRTELNFDETDKIELIKNSIRIMEGINPQEQKLIFDGKVLKDTSTLKSCGIKDGSTISVLFEKSSNFLK</sequence>
<protein>
    <recommendedName>
        <fullName>Ubiquitin-like protein NEDD8-like protein 2</fullName>
    </recommendedName>
</protein>
<evidence type="ECO:0000305" key="1"/>
<proteinExistence type="inferred from homology"/>
<feature type="chain" id="PRO_0000330916" description="Ubiquitin-like protein NEDD8-like protein 2">
    <location>
        <begin position="1"/>
        <end position="80"/>
    </location>
</feature>
<comment type="similarity">
    <text evidence="1">Belongs to the ubiquitin family.</text>
</comment>
<gene>
    <name type="primary">nedd8l2</name>
    <name type="ORF">DDB_G0286927</name>
</gene>